<reference key="1">
    <citation type="journal article" date="2001" name="Biochem. Biophys. Res. Commun.">
        <title>Genomic organization and tissue-specific expression of splice variants of mouse organic anion transporting polypeptide 2.</title>
        <authorList>
            <person name="Ogura K."/>
            <person name="Choudhuri S."/>
            <person name="Klaassen C.D."/>
        </authorList>
    </citation>
    <scope>NUCLEOTIDE SEQUENCE [GENOMIC DNA / MRNA]</scope>
    <scope>ALTERNATIVE SPLICING</scope>
    <source>
        <strain>129/SvJ</strain>
        <strain>BALB/cJ</strain>
        <tissue>Liver</tissue>
    </source>
</reference>
<reference key="2">
    <citation type="journal article" date="2010" name="Cell">
        <title>A tissue-specific atlas of mouse protein phosphorylation and expression.</title>
        <authorList>
            <person name="Huttlin E.L."/>
            <person name="Jedrychowski M.P."/>
            <person name="Elias J.E."/>
            <person name="Goswami T."/>
            <person name="Rad R."/>
            <person name="Beausoleil S.A."/>
            <person name="Villen J."/>
            <person name="Haas W."/>
            <person name="Sowa M.E."/>
            <person name="Gygi S.P."/>
        </authorList>
    </citation>
    <scope>IDENTIFICATION BY MASS SPECTROMETRY [LARGE SCALE ANALYSIS]</scope>
    <source>
        <tissue>Liver</tissue>
    </source>
</reference>
<protein>
    <recommendedName>
        <fullName>Solute carrier organic anion transporter family member 1A4</fullName>
    </recommendedName>
    <alternativeName>
        <fullName>Sodium-independent organic anion-transporting polypeptide 2</fullName>
    </alternativeName>
    <alternativeName>
        <fullName>Solute carrier family 21 member 5</fullName>
    </alternativeName>
</protein>
<gene>
    <name type="primary">Slco1a4</name>
    <name type="synonym">Oatp1a4</name>
    <name type="synonym">Oatp2</name>
    <name type="synonym">Slc21a5</name>
</gene>
<organism>
    <name type="scientific">Mus musculus</name>
    <name type="common">Mouse</name>
    <dbReference type="NCBI Taxonomy" id="10090"/>
    <lineage>
        <taxon>Eukaryota</taxon>
        <taxon>Metazoa</taxon>
        <taxon>Chordata</taxon>
        <taxon>Craniata</taxon>
        <taxon>Vertebrata</taxon>
        <taxon>Euteleostomi</taxon>
        <taxon>Mammalia</taxon>
        <taxon>Eutheria</taxon>
        <taxon>Euarchontoglires</taxon>
        <taxon>Glires</taxon>
        <taxon>Rodentia</taxon>
        <taxon>Myomorpha</taxon>
        <taxon>Muroidea</taxon>
        <taxon>Muridae</taxon>
        <taxon>Murinae</taxon>
        <taxon>Mus</taxon>
        <taxon>Mus</taxon>
    </lineage>
</organism>
<comment type="function">
    <text evidence="1">Mediates the Na(+)-independent transport of organic anions such as taurocholate, cholate, 17-beta-glucuronosyl estradiol, prostaglandin E2, estrone 3-sulfate, L-thyroxine (T4), the cardiac glycosides ouabain and digoxin and thyroid hormones. Shows a pH-sensitive substrate specificity which may be ascribed to the protonation state of the binding site and leads to a stimulation of substrate transport in an acidic microenvironment. Hydrogencarbonate/HCO3(-) acts as the probable counteranion that exchanges for organic anions.</text>
</comment>
<comment type="catalytic activity">
    <reaction evidence="1">
        <text>estrone 3-sulfate(out) = estrone 3-sulfate(in)</text>
        <dbReference type="Rhea" id="RHEA:71835"/>
        <dbReference type="ChEBI" id="CHEBI:60050"/>
    </reaction>
</comment>
<comment type="catalytic activity">
    <reaction evidence="1">
        <text>taurocholate(out) = taurocholate(in)</text>
        <dbReference type="Rhea" id="RHEA:71703"/>
        <dbReference type="ChEBI" id="CHEBI:36257"/>
    </reaction>
</comment>
<comment type="catalytic activity">
    <reaction evidence="1">
        <text>prostaglandin E2(out) = prostaglandin E2(in)</text>
        <dbReference type="Rhea" id="RHEA:50984"/>
        <dbReference type="ChEBI" id="CHEBI:606564"/>
    </reaction>
</comment>
<comment type="catalytic activity">
    <reaction evidence="1">
        <text>L-thyroxine(out) = L-thyroxine(in)</text>
        <dbReference type="Rhea" id="RHEA:71819"/>
        <dbReference type="ChEBI" id="CHEBI:58448"/>
    </reaction>
</comment>
<comment type="subcellular location">
    <subcellularLocation>
        <location>Cell membrane</location>
        <topology>Multi-pass membrane protein</topology>
    </subcellularLocation>
</comment>
<comment type="alternative products">
    <event type="alternative splicing"/>
    <isoform>
        <id>Q9EP96-1</id>
        <name>1</name>
        <sequence type="displayed"/>
    </isoform>
    <text>3 isoforms are produced.</text>
</comment>
<comment type="tissue specificity">
    <text>Highly expressed in brain and liver. Detected at very low levels in heart and lung.</text>
</comment>
<comment type="domain">
    <text evidence="1">A conserved histidine residue in the third TMD (His-107) may play an essential role in the pH sensitivity of SLCO1A4/OATP1A4-mediated substrate transport.</text>
</comment>
<comment type="similarity">
    <text evidence="6">Belongs to the organo anion transporter (TC 2.A.60) family.</text>
</comment>
<sequence length="670" mass="73965">MGKSEKEVATHGVRCFSKIKAFLLALTCAYVSKSLSGTYMNSMLTQIERQFGIPTSVVGLINGSFEIGNLLLIIFVSYFGTKLHRPIMIGVGCAVMGLGCFLISIPHFLMGRYEYETTILPTSNLSSNSFVCTENRTQTLKPTQDPTECVKEMKSLMWIYVLVGNIIRGMGETPIMPLGISYIEDFAKSENSPLYIGILETGMTIGPLIGLLLGSSCANIYVDTGSVNTDDLTITPTDTRWVGAWWIGFLVCAGVNILTSIPFFFFPKTLLKEGLQDNGDGTENAKEEKHREKIKEENRGITKDFFLFMKSLSCNPIYMIFILISVIQVNAFINSFTFMPKYLEQQYGKSTAEIVFLMGLYMLPPICLGYLIGGLIMKKFKITVKKAAYIGFWLSLTEYLLSFVSYIMTCDNFPVAGLTTSYEGVQHPLYVENNVLADCNTKCSCLTNTWDPVCGDNGLSYMSACLAGCEKSVGTGTNMVFQNCSCIQSSGNASAVLGLCDKGPECANKLQYFLIISIIGCFIFSLGAIPGYMVLLRCMKSEEKSLGVGLHTFCMRILGGIPAPIYFGALIDRTCLHWGTLKCGEPGACRMYDINSFRRIYLGLPAALRGASFLPALFILILMRKFQFPGDIDSSDTDPAEMKLTAKESKCTNVHRSPTMQNDGERKTKL</sequence>
<evidence type="ECO:0000250" key="1">
    <source>
        <dbReference type="UniProtKB" id="O35913"/>
    </source>
</evidence>
<evidence type="ECO:0000250" key="2">
    <source>
        <dbReference type="UniProtKB" id="P46720"/>
    </source>
</evidence>
<evidence type="ECO:0000255" key="3"/>
<evidence type="ECO:0000255" key="4">
    <source>
        <dbReference type="PROSITE-ProRule" id="PRU00798"/>
    </source>
</evidence>
<evidence type="ECO:0000256" key="5">
    <source>
        <dbReference type="SAM" id="MobiDB-lite"/>
    </source>
</evidence>
<evidence type="ECO:0000305" key="6"/>
<keyword id="KW-0025">Alternative splicing</keyword>
<keyword id="KW-1003">Cell membrane</keyword>
<keyword id="KW-1015">Disulfide bond</keyword>
<keyword id="KW-0325">Glycoprotein</keyword>
<keyword id="KW-0406">Ion transport</keyword>
<keyword id="KW-0472">Membrane</keyword>
<keyword id="KW-0597">Phosphoprotein</keyword>
<keyword id="KW-1185">Reference proteome</keyword>
<keyword id="KW-0812">Transmembrane</keyword>
<keyword id="KW-1133">Transmembrane helix</keyword>
<keyword id="KW-0813">Transport</keyword>
<dbReference type="EMBL" id="AB043023">
    <property type="protein sequence ID" value="BAB18305.1"/>
    <property type="molecule type" value="Genomic_DNA"/>
</dbReference>
<dbReference type="EMBL" id="AB031814">
    <property type="protein sequence ID" value="BAB12445.1"/>
    <property type="molecule type" value="mRNA"/>
</dbReference>
<dbReference type="CCDS" id="CCDS39690.1">
    <molecule id="Q9EP96-1"/>
</dbReference>
<dbReference type="PIR" id="JC7616">
    <property type="entry name" value="JC7616"/>
</dbReference>
<dbReference type="RefSeq" id="NP_001342506.1">
    <molecule id="Q9EP96-1"/>
    <property type="nucleotide sequence ID" value="NM_001355577.2"/>
</dbReference>
<dbReference type="RefSeq" id="NP_001397586.1">
    <molecule id="Q9EP96-1"/>
    <property type="nucleotide sequence ID" value="NM_001410657.1"/>
</dbReference>
<dbReference type="RefSeq" id="NP_109612.1">
    <molecule id="Q9EP96-1"/>
    <property type="nucleotide sequence ID" value="NM_030687.3"/>
</dbReference>
<dbReference type="RefSeq" id="XP_006507023.1">
    <property type="nucleotide sequence ID" value="XM_006506960.3"/>
</dbReference>
<dbReference type="RefSeq" id="XP_011239886.1">
    <property type="nucleotide sequence ID" value="XM_011241584.2"/>
</dbReference>
<dbReference type="RefSeq" id="XP_011239887.1">
    <molecule id="Q9EP96-1"/>
    <property type="nucleotide sequence ID" value="XM_011241585.3"/>
</dbReference>
<dbReference type="RefSeq" id="XP_011239888.1">
    <property type="nucleotide sequence ID" value="XM_011241586.2"/>
</dbReference>
<dbReference type="RefSeq" id="XP_036022096.1">
    <molecule id="Q9EP96-1"/>
    <property type="nucleotide sequence ID" value="XM_036166203.1"/>
</dbReference>
<dbReference type="RefSeq" id="XP_036022097.1">
    <molecule id="Q9EP96-1"/>
    <property type="nucleotide sequence ID" value="XM_036166204.1"/>
</dbReference>
<dbReference type="SMR" id="Q9EP96"/>
<dbReference type="FunCoup" id="Q9EP96">
    <property type="interactions" value="334"/>
</dbReference>
<dbReference type="STRING" id="10090.ENSMUSP00000130746"/>
<dbReference type="ChEMBL" id="CHEMBL2073700"/>
<dbReference type="TCDB" id="2.A.60.1.6">
    <property type="family name" value="the organo anion transporter (oat) family"/>
</dbReference>
<dbReference type="GlyCosmos" id="Q9EP96">
    <property type="glycosylation" value="4 sites, No reported glycans"/>
</dbReference>
<dbReference type="GlyGen" id="Q9EP96">
    <property type="glycosylation" value="4 sites"/>
</dbReference>
<dbReference type="iPTMnet" id="Q9EP96"/>
<dbReference type="PhosphoSitePlus" id="Q9EP96"/>
<dbReference type="SwissPalm" id="Q9EP96"/>
<dbReference type="jPOST" id="Q9EP96"/>
<dbReference type="PaxDb" id="10090-ENSMUSP00000130746"/>
<dbReference type="ProteomicsDB" id="261307">
    <molecule id="Q9EP96-1"/>
</dbReference>
<dbReference type="DNASU" id="28250"/>
<dbReference type="Ensembl" id="ENSMUST00000032364.14">
    <molecule id="Q9EP96-1"/>
    <property type="protein sequence ID" value="ENSMUSP00000032364.8"/>
    <property type="gene ID" value="ENSMUSG00000030237.15"/>
</dbReference>
<dbReference type="Ensembl" id="ENSMUST00000165990.8">
    <molecule id="Q9EP96-1"/>
    <property type="protein sequence ID" value="ENSMUSP00000130746.2"/>
    <property type="gene ID" value="ENSMUSG00000030237.15"/>
</dbReference>
<dbReference type="GeneID" id="28250"/>
<dbReference type="KEGG" id="mmu:28250"/>
<dbReference type="UCSC" id="uc009eos.1">
    <molecule id="Q9EP96-1"/>
    <property type="organism name" value="mouse"/>
</dbReference>
<dbReference type="AGR" id="MGI:1351896"/>
<dbReference type="CTD" id="28250"/>
<dbReference type="MGI" id="MGI:1351896">
    <property type="gene designation" value="Slco1a4"/>
</dbReference>
<dbReference type="VEuPathDB" id="HostDB:ENSMUSG00000030237"/>
<dbReference type="eggNOG" id="KOG3626">
    <property type="taxonomic scope" value="Eukaryota"/>
</dbReference>
<dbReference type="GeneTree" id="ENSGT01130000278312"/>
<dbReference type="HOGENOM" id="CLU_008954_4_0_1"/>
<dbReference type="InParanoid" id="Q9EP96"/>
<dbReference type="OMA" id="GCKESIG"/>
<dbReference type="OrthoDB" id="5062115at2759"/>
<dbReference type="PhylomeDB" id="Q9EP96"/>
<dbReference type="TreeFam" id="TF317540"/>
<dbReference type="Reactome" id="R-MMU-159418">
    <property type="pathway name" value="Recycling of bile acids and salts"/>
</dbReference>
<dbReference type="Reactome" id="R-MMU-879518">
    <property type="pathway name" value="Transport of organic anions"/>
</dbReference>
<dbReference type="Reactome" id="R-MMU-9793528">
    <property type="pathway name" value="Ciprofloxacin ADME"/>
</dbReference>
<dbReference type="BioGRID-ORCS" id="28250">
    <property type="hits" value="1 hit in 79 CRISPR screens"/>
</dbReference>
<dbReference type="ChiTaRS" id="Slco1a4">
    <property type="organism name" value="mouse"/>
</dbReference>
<dbReference type="PRO" id="PR:Q9EP96"/>
<dbReference type="Proteomes" id="UP000000589">
    <property type="component" value="Chromosome 6"/>
</dbReference>
<dbReference type="RNAct" id="Q9EP96">
    <property type="molecule type" value="protein"/>
</dbReference>
<dbReference type="Bgee" id="ENSMUSG00000030237">
    <property type="expression patterns" value="Expressed in pigmented layer of retina and 108 other cell types or tissues"/>
</dbReference>
<dbReference type="ExpressionAtlas" id="Q9EP96">
    <property type="expression patterns" value="baseline and differential"/>
</dbReference>
<dbReference type="GO" id="GO:0009925">
    <property type="term" value="C:basal plasma membrane"/>
    <property type="evidence" value="ECO:0007669"/>
    <property type="project" value="Ensembl"/>
</dbReference>
<dbReference type="GO" id="GO:0016020">
    <property type="term" value="C:membrane"/>
    <property type="evidence" value="ECO:0000314"/>
    <property type="project" value="MGI"/>
</dbReference>
<dbReference type="GO" id="GO:0015125">
    <property type="term" value="F:bile acid transmembrane transporter activity"/>
    <property type="evidence" value="ECO:0007669"/>
    <property type="project" value="Ensembl"/>
</dbReference>
<dbReference type="GO" id="GO:0008514">
    <property type="term" value="F:organic anion transmembrane transporter activity"/>
    <property type="evidence" value="ECO:0000314"/>
    <property type="project" value="MGI"/>
</dbReference>
<dbReference type="GO" id="GO:0071466">
    <property type="term" value="P:cellular response to xenobiotic stimulus"/>
    <property type="evidence" value="ECO:0007669"/>
    <property type="project" value="Ensembl"/>
</dbReference>
<dbReference type="GO" id="GO:0006820">
    <property type="term" value="P:monoatomic anion transport"/>
    <property type="evidence" value="ECO:0000314"/>
    <property type="project" value="MGI"/>
</dbReference>
<dbReference type="GO" id="GO:0043627">
    <property type="term" value="P:response to estrogen"/>
    <property type="evidence" value="ECO:0007669"/>
    <property type="project" value="Ensembl"/>
</dbReference>
<dbReference type="GO" id="GO:0043252">
    <property type="term" value="P:sodium-independent organic anion transport"/>
    <property type="evidence" value="ECO:0007669"/>
    <property type="project" value="Ensembl"/>
</dbReference>
<dbReference type="FunFam" id="1.20.1250.20:FF:000210">
    <property type="entry name" value="Solute carrier organic anion transporter family member"/>
    <property type="match status" value="1"/>
</dbReference>
<dbReference type="Gene3D" id="1.20.1250.20">
    <property type="entry name" value="MFS general substrate transporter like domains"/>
    <property type="match status" value="1"/>
</dbReference>
<dbReference type="InterPro" id="IPR002350">
    <property type="entry name" value="Kazal_dom"/>
</dbReference>
<dbReference type="InterPro" id="IPR036058">
    <property type="entry name" value="Kazal_dom_sf"/>
</dbReference>
<dbReference type="InterPro" id="IPR020846">
    <property type="entry name" value="MFS_dom"/>
</dbReference>
<dbReference type="InterPro" id="IPR036259">
    <property type="entry name" value="MFS_trans_sf"/>
</dbReference>
<dbReference type="InterPro" id="IPR004156">
    <property type="entry name" value="OATP"/>
</dbReference>
<dbReference type="NCBIfam" id="TIGR00805">
    <property type="entry name" value="oat"/>
    <property type="match status" value="1"/>
</dbReference>
<dbReference type="PANTHER" id="PTHR11388">
    <property type="entry name" value="ORGANIC ANION TRANSPORTER"/>
    <property type="match status" value="1"/>
</dbReference>
<dbReference type="PANTHER" id="PTHR11388:SF16">
    <property type="entry name" value="SOLUTE CARRIER ORGANIC ANION TRANSPORTER FAMILY MEMBER 1A2"/>
    <property type="match status" value="1"/>
</dbReference>
<dbReference type="Pfam" id="PF07648">
    <property type="entry name" value="Kazal_2"/>
    <property type="match status" value="1"/>
</dbReference>
<dbReference type="Pfam" id="PF03137">
    <property type="entry name" value="OATP"/>
    <property type="match status" value="1"/>
</dbReference>
<dbReference type="SUPFAM" id="SSF100895">
    <property type="entry name" value="Kazal-type serine protease inhibitors"/>
    <property type="match status" value="1"/>
</dbReference>
<dbReference type="SUPFAM" id="SSF103473">
    <property type="entry name" value="MFS general substrate transporter"/>
    <property type="match status" value="1"/>
</dbReference>
<dbReference type="PROSITE" id="PS51465">
    <property type="entry name" value="KAZAL_2"/>
    <property type="match status" value="1"/>
</dbReference>
<dbReference type="PROSITE" id="PS50850">
    <property type="entry name" value="MFS"/>
    <property type="match status" value="1"/>
</dbReference>
<feature type="chain" id="PRO_0000191046" description="Solute carrier organic anion transporter family member 1A4">
    <location>
        <begin position="1"/>
        <end position="670"/>
    </location>
</feature>
<feature type="topological domain" description="Cytoplasmic" evidence="3">
    <location>
        <begin position="1"/>
        <end position="20"/>
    </location>
</feature>
<feature type="transmembrane region" description="Helical; Name=1" evidence="3">
    <location>
        <begin position="21"/>
        <end position="40"/>
    </location>
</feature>
<feature type="topological domain" description="Extracellular" evidence="3">
    <location>
        <begin position="41"/>
        <end position="59"/>
    </location>
</feature>
<feature type="transmembrane region" description="Helical; Name=2" evidence="3">
    <location>
        <begin position="60"/>
        <end position="80"/>
    </location>
</feature>
<feature type="topological domain" description="Cytoplasmic" evidence="3">
    <location>
        <begin position="81"/>
        <end position="86"/>
    </location>
</feature>
<feature type="transmembrane region" description="Helical; Name=3" evidence="3">
    <location>
        <begin position="87"/>
        <end position="111"/>
    </location>
</feature>
<feature type="topological domain" description="Extracellular" evidence="3">
    <location>
        <begin position="112"/>
        <end position="155"/>
    </location>
</feature>
<feature type="transmembrane region" description="Helical; Name=4" evidence="3">
    <location>
        <begin position="156"/>
        <end position="184"/>
    </location>
</feature>
<feature type="topological domain" description="Cytoplasmic" evidence="3">
    <location>
        <begin position="185"/>
        <end position="203"/>
    </location>
</feature>
<feature type="transmembrane region" description="Helical; Name=5" evidence="3">
    <location>
        <begin position="204"/>
        <end position="224"/>
    </location>
</feature>
<feature type="topological domain" description="Extracellular" evidence="3">
    <location>
        <begin position="225"/>
        <end position="242"/>
    </location>
</feature>
<feature type="transmembrane region" description="Helical; Name=6" evidence="3">
    <location>
        <begin position="243"/>
        <end position="267"/>
    </location>
</feature>
<feature type="topological domain" description="Cytoplasmic" evidence="3">
    <location>
        <begin position="268"/>
        <end position="311"/>
    </location>
</feature>
<feature type="transmembrane region" description="Helical; Name=7" evidence="3">
    <location>
        <begin position="312"/>
        <end position="333"/>
    </location>
</feature>
<feature type="topological domain" description="Extracellular" evidence="3">
    <location>
        <begin position="334"/>
        <end position="353"/>
    </location>
</feature>
<feature type="transmembrane region" description="Helical; Name=8" evidence="3">
    <location>
        <begin position="354"/>
        <end position="377"/>
    </location>
</feature>
<feature type="topological domain" description="Cytoplasmic" evidence="3">
    <location>
        <begin position="378"/>
        <end position="381"/>
    </location>
</feature>
<feature type="transmembrane region" description="Helical; Name=9" evidence="3">
    <location>
        <begin position="382"/>
        <end position="405"/>
    </location>
</feature>
<feature type="topological domain" description="Extracellular" evidence="3">
    <location>
        <begin position="406"/>
        <end position="513"/>
    </location>
</feature>
<feature type="transmembrane region" description="Helical; Name=10" evidence="3">
    <location>
        <begin position="514"/>
        <end position="536"/>
    </location>
</feature>
<feature type="topological domain" description="Cytoplasmic" evidence="3">
    <location>
        <begin position="537"/>
        <end position="545"/>
    </location>
</feature>
<feature type="transmembrane region" description="Helical; Name=11" evidence="3">
    <location>
        <begin position="546"/>
        <end position="571"/>
    </location>
</feature>
<feature type="topological domain" description="Extracellular" evidence="3">
    <location>
        <begin position="572"/>
        <end position="605"/>
    </location>
</feature>
<feature type="transmembrane region" description="Helical; Name=12" evidence="3">
    <location>
        <begin position="606"/>
        <end position="623"/>
    </location>
</feature>
<feature type="topological domain" description="Cytoplasmic" evidence="3">
    <location>
        <begin position="624"/>
        <end position="670"/>
    </location>
</feature>
<feature type="domain" description="Kazal-like" evidence="4">
    <location>
        <begin position="433"/>
        <end position="488"/>
    </location>
</feature>
<feature type="region of interest" description="Disordered" evidence="5">
    <location>
        <begin position="649"/>
        <end position="670"/>
    </location>
</feature>
<feature type="compositionally biased region" description="Polar residues" evidence="5">
    <location>
        <begin position="651"/>
        <end position="662"/>
    </location>
</feature>
<feature type="modified residue" description="Phosphoserine" evidence="2">
    <location>
        <position position="634"/>
    </location>
</feature>
<feature type="modified residue" description="Phosphoserine" evidence="2">
    <location>
        <position position="635"/>
    </location>
</feature>
<feature type="glycosylation site" description="N-linked (GlcNAc...) asparagine" evidence="3">
    <location>
        <position position="124"/>
    </location>
</feature>
<feature type="glycosylation site" description="N-linked (GlcNAc...) asparagine" evidence="3">
    <location>
        <position position="135"/>
    </location>
</feature>
<feature type="glycosylation site" description="N-linked (GlcNAc...) asparagine" evidence="3">
    <location>
        <position position="483"/>
    </location>
</feature>
<feature type="glycosylation site" description="N-linked (GlcNAc...) asparagine" evidence="3">
    <location>
        <position position="492"/>
    </location>
</feature>
<feature type="disulfide bond" evidence="4">
    <location>
        <begin position="439"/>
        <end position="469"/>
    </location>
</feature>
<feature type="disulfide bond" evidence="4">
    <location>
        <begin position="445"/>
        <end position="465"/>
    </location>
</feature>
<feature type="disulfide bond" evidence="4">
    <location>
        <begin position="454"/>
        <end position="486"/>
    </location>
</feature>
<accession>Q9EP96</accession>
<name>SO1A4_MOUSE</name>
<proteinExistence type="evidence at protein level"/>